<proteinExistence type="inferred from homology"/>
<protein>
    <recommendedName>
        <fullName evidence="1">Enolase</fullName>
        <ecNumber evidence="1">4.2.1.11</ecNumber>
    </recommendedName>
    <alternativeName>
        <fullName evidence="1">2-phospho-D-glycerate hydro-lyase</fullName>
    </alternativeName>
    <alternativeName>
        <fullName evidence="1">2-phosphoglycerate dehydratase</fullName>
    </alternativeName>
</protein>
<dbReference type="EC" id="4.2.1.11" evidence="1"/>
<dbReference type="EMBL" id="CP001219">
    <property type="protein sequence ID" value="ACK80382.1"/>
    <property type="molecule type" value="Genomic_DNA"/>
</dbReference>
<dbReference type="RefSeq" id="WP_012536392.1">
    <property type="nucleotide sequence ID" value="NC_011761.1"/>
</dbReference>
<dbReference type="SMR" id="B7J6R4"/>
<dbReference type="STRING" id="243159.AFE_0849"/>
<dbReference type="PaxDb" id="243159-AFE_0849"/>
<dbReference type="GeneID" id="65280176"/>
<dbReference type="KEGG" id="afr:AFE_0849"/>
<dbReference type="eggNOG" id="COG0148">
    <property type="taxonomic scope" value="Bacteria"/>
</dbReference>
<dbReference type="HOGENOM" id="CLU_031223_2_1_6"/>
<dbReference type="UniPathway" id="UPA00109">
    <property type="reaction ID" value="UER00187"/>
</dbReference>
<dbReference type="Proteomes" id="UP000001362">
    <property type="component" value="Chromosome"/>
</dbReference>
<dbReference type="GO" id="GO:0009986">
    <property type="term" value="C:cell surface"/>
    <property type="evidence" value="ECO:0007669"/>
    <property type="project" value="UniProtKB-SubCell"/>
</dbReference>
<dbReference type="GO" id="GO:0005576">
    <property type="term" value="C:extracellular region"/>
    <property type="evidence" value="ECO:0007669"/>
    <property type="project" value="UniProtKB-SubCell"/>
</dbReference>
<dbReference type="GO" id="GO:0000015">
    <property type="term" value="C:phosphopyruvate hydratase complex"/>
    <property type="evidence" value="ECO:0007669"/>
    <property type="project" value="InterPro"/>
</dbReference>
<dbReference type="GO" id="GO:0000287">
    <property type="term" value="F:magnesium ion binding"/>
    <property type="evidence" value="ECO:0007669"/>
    <property type="project" value="UniProtKB-UniRule"/>
</dbReference>
<dbReference type="GO" id="GO:0004634">
    <property type="term" value="F:phosphopyruvate hydratase activity"/>
    <property type="evidence" value="ECO:0007669"/>
    <property type="project" value="UniProtKB-UniRule"/>
</dbReference>
<dbReference type="GO" id="GO:0006096">
    <property type="term" value="P:glycolytic process"/>
    <property type="evidence" value="ECO:0007669"/>
    <property type="project" value="UniProtKB-UniRule"/>
</dbReference>
<dbReference type="CDD" id="cd03313">
    <property type="entry name" value="enolase"/>
    <property type="match status" value="1"/>
</dbReference>
<dbReference type="FunFam" id="3.20.20.120:FF:000001">
    <property type="entry name" value="Enolase"/>
    <property type="match status" value="1"/>
</dbReference>
<dbReference type="FunFam" id="3.30.390.10:FF:000001">
    <property type="entry name" value="Enolase"/>
    <property type="match status" value="1"/>
</dbReference>
<dbReference type="Gene3D" id="3.20.20.120">
    <property type="entry name" value="Enolase-like C-terminal domain"/>
    <property type="match status" value="1"/>
</dbReference>
<dbReference type="Gene3D" id="3.30.390.10">
    <property type="entry name" value="Enolase-like, N-terminal domain"/>
    <property type="match status" value="1"/>
</dbReference>
<dbReference type="HAMAP" id="MF_00318">
    <property type="entry name" value="Enolase"/>
    <property type="match status" value="1"/>
</dbReference>
<dbReference type="InterPro" id="IPR000941">
    <property type="entry name" value="Enolase"/>
</dbReference>
<dbReference type="InterPro" id="IPR036849">
    <property type="entry name" value="Enolase-like_C_sf"/>
</dbReference>
<dbReference type="InterPro" id="IPR029017">
    <property type="entry name" value="Enolase-like_N"/>
</dbReference>
<dbReference type="InterPro" id="IPR020810">
    <property type="entry name" value="Enolase_C"/>
</dbReference>
<dbReference type="InterPro" id="IPR020809">
    <property type="entry name" value="Enolase_CS"/>
</dbReference>
<dbReference type="InterPro" id="IPR020811">
    <property type="entry name" value="Enolase_N"/>
</dbReference>
<dbReference type="NCBIfam" id="TIGR01060">
    <property type="entry name" value="eno"/>
    <property type="match status" value="1"/>
</dbReference>
<dbReference type="PANTHER" id="PTHR11902">
    <property type="entry name" value="ENOLASE"/>
    <property type="match status" value="1"/>
</dbReference>
<dbReference type="PANTHER" id="PTHR11902:SF1">
    <property type="entry name" value="ENOLASE"/>
    <property type="match status" value="1"/>
</dbReference>
<dbReference type="Pfam" id="PF00113">
    <property type="entry name" value="Enolase_C"/>
    <property type="match status" value="1"/>
</dbReference>
<dbReference type="Pfam" id="PF03952">
    <property type="entry name" value="Enolase_N"/>
    <property type="match status" value="1"/>
</dbReference>
<dbReference type="PIRSF" id="PIRSF001400">
    <property type="entry name" value="Enolase"/>
    <property type="match status" value="1"/>
</dbReference>
<dbReference type="PRINTS" id="PR00148">
    <property type="entry name" value="ENOLASE"/>
</dbReference>
<dbReference type="SFLD" id="SFLDF00002">
    <property type="entry name" value="enolase"/>
    <property type="match status" value="1"/>
</dbReference>
<dbReference type="SFLD" id="SFLDG00178">
    <property type="entry name" value="enolase"/>
    <property type="match status" value="1"/>
</dbReference>
<dbReference type="SMART" id="SM01192">
    <property type="entry name" value="Enolase_C"/>
    <property type="match status" value="1"/>
</dbReference>
<dbReference type="SMART" id="SM01193">
    <property type="entry name" value="Enolase_N"/>
    <property type="match status" value="1"/>
</dbReference>
<dbReference type="SUPFAM" id="SSF51604">
    <property type="entry name" value="Enolase C-terminal domain-like"/>
    <property type="match status" value="1"/>
</dbReference>
<dbReference type="SUPFAM" id="SSF54826">
    <property type="entry name" value="Enolase N-terminal domain-like"/>
    <property type="match status" value="1"/>
</dbReference>
<dbReference type="PROSITE" id="PS00164">
    <property type="entry name" value="ENOLASE"/>
    <property type="match status" value="1"/>
</dbReference>
<gene>
    <name evidence="1" type="primary">eno</name>
    <name type="ordered locus">AFE_0849</name>
</gene>
<keyword id="KW-0963">Cytoplasm</keyword>
<keyword id="KW-0324">Glycolysis</keyword>
<keyword id="KW-0456">Lyase</keyword>
<keyword id="KW-0460">Magnesium</keyword>
<keyword id="KW-0479">Metal-binding</keyword>
<keyword id="KW-1185">Reference proteome</keyword>
<keyword id="KW-0964">Secreted</keyword>
<organism>
    <name type="scientific">Acidithiobacillus ferrooxidans (strain ATCC 23270 / DSM 14882 / CIP 104768 / NCIMB 8455)</name>
    <name type="common">Ferrobacillus ferrooxidans (strain ATCC 23270)</name>
    <dbReference type="NCBI Taxonomy" id="243159"/>
    <lineage>
        <taxon>Bacteria</taxon>
        <taxon>Pseudomonadati</taxon>
        <taxon>Pseudomonadota</taxon>
        <taxon>Acidithiobacillia</taxon>
        <taxon>Acidithiobacillales</taxon>
        <taxon>Acidithiobacillaceae</taxon>
        <taxon>Acidithiobacillus</taxon>
    </lineage>
</organism>
<sequence>MSAIVRIQAREVLDSRGNPTVEAEVYLDNGGMGRAIVPSGASTGEREAVELRDGGQRYGGKGVRKAVEHVNGEIQDALLGMEAEEQEHIDAALCALDGTENKARLGANAILSVSLATAHAAAHAAGQPLYRYIGGLGPLQLPVPMMNVINGGAHADNDVDMQEFMLIPAGAESFSEALQMGVEVFHSLKAVLQSRGLATTVGDEGGFAPNLPSNEAALELLMDAINKAGYQPGKDIWLGMDVASSEFYRDGRYHLASERRELDSAQFVDYLAALADRYPLISIEDGMDQNDWEGWITLTDRLGDRLQLVGDDIFVTNTTILREGIERGVANSILIKLNQIGTLSETLAAIEMAKVHSYTAIVSHRSGETEDTTLADVAVATGCGQIKTGSLSRTDRVAKYNRLLRIEEDLGDAARYPGLATFYNLD</sequence>
<accession>B7J6R4</accession>
<reference key="1">
    <citation type="journal article" date="2008" name="BMC Genomics">
        <title>Acidithiobacillus ferrooxidans metabolism: from genome sequence to industrial applications.</title>
        <authorList>
            <person name="Valdes J."/>
            <person name="Pedroso I."/>
            <person name="Quatrini R."/>
            <person name="Dodson R.J."/>
            <person name="Tettelin H."/>
            <person name="Blake R. II"/>
            <person name="Eisen J.A."/>
            <person name="Holmes D.S."/>
        </authorList>
    </citation>
    <scope>NUCLEOTIDE SEQUENCE [LARGE SCALE GENOMIC DNA]</scope>
    <source>
        <strain>ATCC 23270 / DSM 14882 / CIP 104768 / NCIMB 8455</strain>
    </source>
</reference>
<comment type="function">
    <text evidence="1">Catalyzes the reversible conversion of 2-phosphoglycerate (2-PG) into phosphoenolpyruvate (PEP). It is essential for the degradation of carbohydrates via glycolysis.</text>
</comment>
<comment type="catalytic activity">
    <reaction evidence="1">
        <text>(2R)-2-phosphoglycerate = phosphoenolpyruvate + H2O</text>
        <dbReference type="Rhea" id="RHEA:10164"/>
        <dbReference type="ChEBI" id="CHEBI:15377"/>
        <dbReference type="ChEBI" id="CHEBI:58289"/>
        <dbReference type="ChEBI" id="CHEBI:58702"/>
        <dbReference type="EC" id="4.2.1.11"/>
    </reaction>
</comment>
<comment type="cofactor">
    <cofactor evidence="1">
        <name>Mg(2+)</name>
        <dbReference type="ChEBI" id="CHEBI:18420"/>
    </cofactor>
    <text evidence="1">Binds a second Mg(2+) ion via substrate during catalysis.</text>
</comment>
<comment type="pathway">
    <text evidence="1">Carbohydrate degradation; glycolysis; pyruvate from D-glyceraldehyde 3-phosphate: step 4/5.</text>
</comment>
<comment type="subcellular location">
    <subcellularLocation>
        <location evidence="1">Cytoplasm</location>
    </subcellularLocation>
    <subcellularLocation>
        <location evidence="1">Secreted</location>
    </subcellularLocation>
    <subcellularLocation>
        <location evidence="1">Cell surface</location>
    </subcellularLocation>
    <text evidence="1">Fractions of enolase are present in both the cytoplasm and on the cell surface.</text>
</comment>
<comment type="similarity">
    <text evidence="1">Belongs to the enolase family.</text>
</comment>
<feature type="chain" id="PRO_1000119562" description="Enolase">
    <location>
        <begin position="1"/>
        <end position="426"/>
    </location>
</feature>
<feature type="active site" description="Proton donor" evidence="1">
    <location>
        <position position="204"/>
    </location>
</feature>
<feature type="active site" description="Proton acceptor" evidence="1">
    <location>
        <position position="336"/>
    </location>
</feature>
<feature type="binding site" evidence="1">
    <location>
        <position position="162"/>
    </location>
    <ligand>
        <name>(2R)-2-phosphoglycerate</name>
        <dbReference type="ChEBI" id="CHEBI:58289"/>
    </ligand>
</feature>
<feature type="binding site" evidence="1">
    <location>
        <position position="241"/>
    </location>
    <ligand>
        <name>Mg(2+)</name>
        <dbReference type="ChEBI" id="CHEBI:18420"/>
    </ligand>
</feature>
<feature type="binding site" evidence="1">
    <location>
        <position position="284"/>
    </location>
    <ligand>
        <name>Mg(2+)</name>
        <dbReference type="ChEBI" id="CHEBI:18420"/>
    </ligand>
</feature>
<feature type="binding site" evidence="1">
    <location>
        <position position="311"/>
    </location>
    <ligand>
        <name>Mg(2+)</name>
        <dbReference type="ChEBI" id="CHEBI:18420"/>
    </ligand>
</feature>
<feature type="binding site" evidence="1">
    <location>
        <position position="336"/>
    </location>
    <ligand>
        <name>(2R)-2-phosphoglycerate</name>
        <dbReference type="ChEBI" id="CHEBI:58289"/>
    </ligand>
</feature>
<feature type="binding site" evidence="1">
    <location>
        <position position="365"/>
    </location>
    <ligand>
        <name>(2R)-2-phosphoglycerate</name>
        <dbReference type="ChEBI" id="CHEBI:58289"/>
    </ligand>
</feature>
<feature type="binding site" evidence="1">
    <location>
        <position position="366"/>
    </location>
    <ligand>
        <name>(2R)-2-phosphoglycerate</name>
        <dbReference type="ChEBI" id="CHEBI:58289"/>
    </ligand>
</feature>
<feature type="binding site" evidence="1">
    <location>
        <position position="387"/>
    </location>
    <ligand>
        <name>(2R)-2-phosphoglycerate</name>
        <dbReference type="ChEBI" id="CHEBI:58289"/>
    </ligand>
</feature>
<evidence type="ECO:0000255" key="1">
    <source>
        <dbReference type="HAMAP-Rule" id="MF_00318"/>
    </source>
</evidence>
<name>ENO_ACIF2</name>